<accession>C0MCV2</accession>
<reference key="1">
    <citation type="journal article" date="2009" name="PLoS Pathog.">
        <title>Genomic evidence for the evolution of Streptococcus equi: host restriction, increased virulence, and genetic exchange with human pathogens.</title>
        <authorList>
            <person name="Holden M.T.G."/>
            <person name="Heather Z."/>
            <person name="Paillot R."/>
            <person name="Steward K.F."/>
            <person name="Webb K."/>
            <person name="Ainslie F."/>
            <person name="Jourdan T."/>
            <person name="Bason N.C."/>
            <person name="Holroyd N.E."/>
            <person name="Mungall K."/>
            <person name="Quail M.A."/>
            <person name="Sanders M."/>
            <person name="Simmonds M."/>
            <person name="Willey D."/>
            <person name="Brooks K."/>
            <person name="Aanensen D.M."/>
            <person name="Spratt B.G."/>
            <person name="Jolley K.A."/>
            <person name="Maiden M.C.J."/>
            <person name="Kehoe M."/>
            <person name="Chanter N."/>
            <person name="Bentley S.D."/>
            <person name="Robinson C."/>
            <person name="Maskell D.J."/>
            <person name="Parkhill J."/>
            <person name="Waller A.S."/>
        </authorList>
    </citation>
    <scope>NUCLEOTIDE SEQUENCE [LARGE SCALE GENOMIC DNA]</scope>
    <source>
        <strain>H70</strain>
    </source>
</reference>
<protein>
    <recommendedName>
        <fullName evidence="1">Probable potassium transport system protein Kup</fullName>
    </recommendedName>
</protein>
<feature type="chain" id="PRO_1000215377" description="Probable potassium transport system protein Kup">
    <location>
        <begin position="1"/>
        <end position="667"/>
    </location>
</feature>
<feature type="transmembrane region" description="Helical" evidence="1">
    <location>
        <begin position="16"/>
        <end position="36"/>
    </location>
</feature>
<feature type="transmembrane region" description="Helical" evidence="1">
    <location>
        <begin position="58"/>
        <end position="78"/>
    </location>
</feature>
<feature type="transmembrane region" description="Helical" evidence="1">
    <location>
        <begin position="101"/>
        <end position="121"/>
    </location>
</feature>
<feature type="transmembrane region" description="Helical" evidence="1">
    <location>
        <begin position="146"/>
        <end position="166"/>
    </location>
</feature>
<feature type="transmembrane region" description="Helical" evidence="1">
    <location>
        <begin position="167"/>
        <end position="187"/>
    </location>
</feature>
<feature type="transmembrane region" description="Helical" evidence="1">
    <location>
        <begin position="221"/>
        <end position="241"/>
    </location>
</feature>
<feature type="transmembrane region" description="Helical" evidence="1">
    <location>
        <begin position="253"/>
        <end position="273"/>
    </location>
</feature>
<feature type="transmembrane region" description="Helical" evidence="1">
    <location>
        <begin position="294"/>
        <end position="314"/>
    </location>
</feature>
<feature type="transmembrane region" description="Helical" evidence="1">
    <location>
        <begin position="343"/>
        <end position="363"/>
    </location>
</feature>
<feature type="transmembrane region" description="Helical" evidence="1">
    <location>
        <begin position="373"/>
        <end position="393"/>
    </location>
</feature>
<feature type="transmembrane region" description="Helical" evidence="1">
    <location>
        <begin position="399"/>
        <end position="419"/>
    </location>
</feature>
<feature type="transmembrane region" description="Helical" evidence="1">
    <location>
        <begin position="431"/>
        <end position="451"/>
    </location>
</feature>
<comment type="function">
    <text evidence="1">Transport of potassium into the cell. Likely operates as a K(+):H(+) symporter.</text>
</comment>
<comment type="catalytic activity">
    <reaction evidence="1">
        <text>K(+)(in) + H(+)(in) = K(+)(out) + H(+)(out)</text>
        <dbReference type="Rhea" id="RHEA:28490"/>
        <dbReference type="ChEBI" id="CHEBI:15378"/>
        <dbReference type="ChEBI" id="CHEBI:29103"/>
    </reaction>
    <physiologicalReaction direction="right-to-left" evidence="1">
        <dbReference type="Rhea" id="RHEA:28492"/>
    </physiologicalReaction>
</comment>
<comment type="subcellular location">
    <subcellularLocation>
        <location evidence="1">Cell membrane</location>
        <topology evidence="1">Multi-pass membrane protein</topology>
    </subcellularLocation>
</comment>
<comment type="similarity">
    <text evidence="1">Belongs to the HAK/KUP transporter (TC 2.A.72) family.</text>
</comment>
<proteinExistence type="inferred from homology"/>
<sequence>MSNAHHDAFDKATKAGFIIALGIVYGDIGTSPLYTMQSLVDNQGGLSQVSEAFILGSVSLIIWTLTLVTTIKYVLIALKADNHHEGGIFSLFTLVRRMSRWLIIPAMLGGATLLSDGALTPAVTVTSAIEGLKAVPELSSIYQNQTNVILTTLLILMVLFGLQRFGTGVIGKLFGPVMLVWFSVLGISGLLNSLQHLEILKAINPYYALHLLVSPENHRGIFILGSIFLATTGAEALYSDLGHVGRGNIYASWPFVKVCIILSYCGQAAWILAHKDSGIALNPFFASVPEGLRVYLVILATLAAIIASQALISGSFTLVSEAMRLKIFPLFKITYPGANLGQLYIPVINWSLFAVTSCTVLYFRTSAHMEAAYGLAITITMLMTTILLAYYLIKEGVKPLLASLLMAFFAFIEFIFFLASAVKFMHGGYVVVVLALAIVFVMVIWHAGTVIVAKYVKSLSLNDYKHQIKLLRDDLRFDLYQTNVVYLTNRMKKDLIDRSILYSILDKRPKRAQVYWFVNVRVTDEPYTATYKVDMLGTDYIVCVELYLGFRMPQTVPRYLRTIVQDLMESGRLPKQVQDYTITPGREVGDFRFVIIEERVSYARQLSTLERFVMQTKASIKHVTASPMRWFGLQYSEATVEVVPLLLSDVLKLPIKEIKACTKDEKA</sequence>
<organism>
    <name type="scientific">Streptococcus equi subsp. zooepidemicus (strain H70)</name>
    <dbReference type="NCBI Taxonomy" id="553483"/>
    <lineage>
        <taxon>Bacteria</taxon>
        <taxon>Bacillati</taxon>
        <taxon>Bacillota</taxon>
        <taxon>Bacilli</taxon>
        <taxon>Lactobacillales</taxon>
        <taxon>Streptococcaceae</taxon>
        <taxon>Streptococcus</taxon>
    </lineage>
</organism>
<name>KUP_STRS7</name>
<gene>
    <name evidence="1" type="primary">kup</name>
    <name type="ordered locus">SZO_13500</name>
</gene>
<evidence type="ECO:0000255" key="1">
    <source>
        <dbReference type="HAMAP-Rule" id="MF_01522"/>
    </source>
</evidence>
<dbReference type="EMBL" id="FM204884">
    <property type="protein sequence ID" value="CAW99911.1"/>
    <property type="molecule type" value="Genomic_DNA"/>
</dbReference>
<dbReference type="RefSeq" id="WP_012678267.1">
    <property type="nucleotide sequence ID" value="NZ_CP065054.1"/>
</dbReference>
<dbReference type="KEGG" id="seq:SZO_13500"/>
<dbReference type="eggNOG" id="COG3158">
    <property type="taxonomic scope" value="Bacteria"/>
</dbReference>
<dbReference type="HOGENOM" id="CLU_008142_4_1_9"/>
<dbReference type="Proteomes" id="UP000001368">
    <property type="component" value="Chromosome"/>
</dbReference>
<dbReference type="GO" id="GO:0005886">
    <property type="term" value="C:plasma membrane"/>
    <property type="evidence" value="ECO:0007669"/>
    <property type="project" value="UniProtKB-SubCell"/>
</dbReference>
<dbReference type="GO" id="GO:0015079">
    <property type="term" value="F:potassium ion transmembrane transporter activity"/>
    <property type="evidence" value="ECO:0007669"/>
    <property type="project" value="UniProtKB-UniRule"/>
</dbReference>
<dbReference type="GO" id="GO:0015293">
    <property type="term" value="F:symporter activity"/>
    <property type="evidence" value="ECO:0007669"/>
    <property type="project" value="UniProtKB-UniRule"/>
</dbReference>
<dbReference type="HAMAP" id="MF_01522">
    <property type="entry name" value="Kup"/>
    <property type="match status" value="1"/>
</dbReference>
<dbReference type="InterPro" id="IPR003855">
    <property type="entry name" value="K+_transporter"/>
</dbReference>
<dbReference type="InterPro" id="IPR053952">
    <property type="entry name" value="K_trans_C"/>
</dbReference>
<dbReference type="InterPro" id="IPR053951">
    <property type="entry name" value="K_trans_N"/>
</dbReference>
<dbReference type="InterPro" id="IPR023051">
    <property type="entry name" value="Kup"/>
</dbReference>
<dbReference type="PANTHER" id="PTHR30540:SF83">
    <property type="entry name" value="K+ POTASSIUM TRANSPORTER"/>
    <property type="match status" value="1"/>
</dbReference>
<dbReference type="PANTHER" id="PTHR30540">
    <property type="entry name" value="OSMOTIC STRESS POTASSIUM TRANSPORTER"/>
    <property type="match status" value="1"/>
</dbReference>
<dbReference type="Pfam" id="PF02705">
    <property type="entry name" value="K_trans"/>
    <property type="match status" value="1"/>
</dbReference>
<dbReference type="Pfam" id="PF22776">
    <property type="entry name" value="K_trans_C"/>
    <property type="match status" value="1"/>
</dbReference>
<keyword id="KW-1003">Cell membrane</keyword>
<keyword id="KW-0406">Ion transport</keyword>
<keyword id="KW-0472">Membrane</keyword>
<keyword id="KW-0630">Potassium</keyword>
<keyword id="KW-0633">Potassium transport</keyword>
<keyword id="KW-0769">Symport</keyword>
<keyword id="KW-0812">Transmembrane</keyword>
<keyword id="KW-1133">Transmembrane helix</keyword>
<keyword id="KW-0813">Transport</keyword>